<feature type="chain" id="PRO_1000189879" description="Elongation factor Ts">
    <location>
        <begin position="1"/>
        <end position="346"/>
    </location>
</feature>
<feature type="region of interest" description="Involved in Mg(2+) ion dislocation from EF-Tu" evidence="1">
    <location>
        <begin position="80"/>
        <end position="83"/>
    </location>
</feature>
<organism>
    <name type="scientific">Streptococcus pneumoniae (strain ATCC 700669 / Spain 23F-1)</name>
    <dbReference type="NCBI Taxonomy" id="561276"/>
    <lineage>
        <taxon>Bacteria</taxon>
        <taxon>Bacillati</taxon>
        <taxon>Bacillota</taxon>
        <taxon>Bacilli</taxon>
        <taxon>Lactobacillales</taxon>
        <taxon>Streptococcaceae</taxon>
        <taxon>Streptococcus</taxon>
    </lineage>
</organism>
<gene>
    <name evidence="1" type="primary">tsf</name>
    <name type="ordered locus">SPN23F22470</name>
</gene>
<accession>B8ZQA5</accession>
<sequence length="346" mass="37362">MAEITAKLVKELREKSGAGVMDAKKALVETDGDIEKAIELLREKGMAKAAKKADRVAAEGLTGVYVNGNVAAVIEVNAETDFVAKNAQFVELVNTTAKVIAEGKPANNEEALALIMPSGETLEAAYVSATATIGEKISFRRFALIEKTDAQHFGAYQHNGGRIGVISVVEGGDEALAKQLSMHIAAMKPTVLSYKELDEQFVKDELAQLNHVIDQDNESRAMVNKPALPHLKYGSKAQLTDDVIAQAEADIKAELAAEGKPEKIWDKIIPGKMDRFMLDNTKVDQAYTLLAQVYIMDDSKTVEAYLESVNASVVEFARFEVGEGIEKAANDFEAEVAATMAAALNN</sequence>
<name>EFTS_STRPJ</name>
<reference key="1">
    <citation type="journal article" date="2009" name="J. Bacteriol.">
        <title>Role of conjugative elements in the evolution of the multidrug-resistant pandemic clone Streptococcus pneumoniae Spain23F ST81.</title>
        <authorList>
            <person name="Croucher N.J."/>
            <person name="Walker D."/>
            <person name="Romero P."/>
            <person name="Lennard N."/>
            <person name="Paterson G.K."/>
            <person name="Bason N.C."/>
            <person name="Mitchell A.M."/>
            <person name="Quail M.A."/>
            <person name="Andrew P.W."/>
            <person name="Parkhill J."/>
            <person name="Bentley S.D."/>
            <person name="Mitchell T.J."/>
        </authorList>
    </citation>
    <scope>NUCLEOTIDE SEQUENCE [LARGE SCALE GENOMIC DNA]</scope>
    <source>
        <strain>ATCC 700669 / Spain 23F-1</strain>
    </source>
</reference>
<proteinExistence type="inferred from homology"/>
<protein>
    <recommendedName>
        <fullName evidence="1">Elongation factor Ts</fullName>
        <shortName evidence="1">EF-Ts</shortName>
    </recommendedName>
</protein>
<dbReference type="EMBL" id="FM211187">
    <property type="protein sequence ID" value="CAR69976.1"/>
    <property type="molecule type" value="Genomic_DNA"/>
</dbReference>
<dbReference type="RefSeq" id="WP_000808063.1">
    <property type="nucleotide sequence ID" value="NC_011900.1"/>
</dbReference>
<dbReference type="SMR" id="B8ZQA5"/>
<dbReference type="GeneID" id="45652566"/>
<dbReference type="KEGG" id="sne:SPN23F22470"/>
<dbReference type="HOGENOM" id="CLU_047155_0_1_9"/>
<dbReference type="GO" id="GO:0005737">
    <property type="term" value="C:cytoplasm"/>
    <property type="evidence" value="ECO:0007669"/>
    <property type="project" value="UniProtKB-SubCell"/>
</dbReference>
<dbReference type="GO" id="GO:0003746">
    <property type="term" value="F:translation elongation factor activity"/>
    <property type="evidence" value="ECO:0007669"/>
    <property type="project" value="UniProtKB-UniRule"/>
</dbReference>
<dbReference type="CDD" id="cd14275">
    <property type="entry name" value="UBA_EF-Ts"/>
    <property type="match status" value="1"/>
</dbReference>
<dbReference type="FunFam" id="1.10.286.20:FF:000004">
    <property type="entry name" value="Elongation factor Ts"/>
    <property type="match status" value="1"/>
</dbReference>
<dbReference type="FunFam" id="1.10.8.10:FF:000001">
    <property type="entry name" value="Elongation factor Ts"/>
    <property type="match status" value="1"/>
</dbReference>
<dbReference type="FunFam" id="3.30.479.20:FF:000009">
    <property type="entry name" value="Elongation factor Ts"/>
    <property type="match status" value="1"/>
</dbReference>
<dbReference type="FunFam" id="3.30.479.20:FF:000013">
    <property type="entry name" value="Elongation factor Ts"/>
    <property type="match status" value="1"/>
</dbReference>
<dbReference type="FunFam" id="3.30.479.20:FF:000016">
    <property type="entry name" value="Elongation factor Ts"/>
    <property type="match status" value="1"/>
</dbReference>
<dbReference type="Gene3D" id="1.10.286.20">
    <property type="match status" value="1"/>
</dbReference>
<dbReference type="Gene3D" id="1.10.8.10">
    <property type="entry name" value="DNA helicase RuvA subunit, C-terminal domain"/>
    <property type="match status" value="1"/>
</dbReference>
<dbReference type="Gene3D" id="3.30.479.20">
    <property type="entry name" value="Elongation factor Ts, dimerisation domain"/>
    <property type="match status" value="2"/>
</dbReference>
<dbReference type="HAMAP" id="MF_00050">
    <property type="entry name" value="EF_Ts"/>
    <property type="match status" value="1"/>
</dbReference>
<dbReference type="InterPro" id="IPR036402">
    <property type="entry name" value="EF-Ts_dimer_sf"/>
</dbReference>
<dbReference type="InterPro" id="IPR001816">
    <property type="entry name" value="Transl_elong_EFTs/EF1B"/>
</dbReference>
<dbReference type="InterPro" id="IPR014039">
    <property type="entry name" value="Transl_elong_EFTs/EF1B_dimer"/>
</dbReference>
<dbReference type="InterPro" id="IPR018101">
    <property type="entry name" value="Transl_elong_Ts_CS"/>
</dbReference>
<dbReference type="InterPro" id="IPR009060">
    <property type="entry name" value="UBA-like_sf"/>
</dbReference>
<dbReference type="NCBIfam" id="TIGR00116">
    <property type="entry name" value="tsf"/>
    <property type="match status" value="1"/>
</dbReference>
<dbReference type="PANTHER" id="PTHR11741">
    <property type="entry name" value="ELONGATION FACTOR TS"/>
    <property type="match status" value="1"/>
</dbReference>
<dbReference type="PANTHER" id="PTHR11741:SF0">
    <property type="entry name" value="ELONGATION FACTOR TS, MITOCHONDRIAL"/>
    <property type="match status" value="1"/>
</dbReference>
<dbReference type="Pfam" id="PF00889">
    <property type="entry name" value="EF_TS"/>
    <property type="match status" value="1"/>
</dbReference>
<dbReference type="SUPFAM" id="SSF54713">
    <property type="entry name" value="Elongation factor Ts (EF-Ts), dimerisation domain"/>
    <property type="match status" value="2"/>
</dbReference>
<dbReference type="SUPFAM" id="SSF46934">
    <property type="entry name" value="UBA-like"/>
    <property type="match status" value="1"/>
</dbReference>
<dbReference type="PROSITE" id="PS01126">
    <property type="entry name" value="EF_TS_1"/>
    <property type="match status" value="1"/>
</dbReference>
<dbReference type="PROSITE" id="PS01127">
    <property type="entry name" value="EF_TS_2"/>
    <property type="match status" value="1"/>
</dbReference>
<evidence type="ECO:0000255" key="1">
    <source>
        <dbReference type="HAMAP-Rule" id="MF_00050"/>
    </source>
</evidence>
<comment type="function">
    <text evidence="1">Associates with the EF-Tu.GDP complex and induces the exchange of GDP to GTP. It remains bound to the aminoacyl-tRNA.EF-Tu.GTP complex up to the GTP hydrolysis stage on the ribosome.</text>
</comment>
<comment type="subcellular location">
    <subcellularLocation>
        <location evidence="1">Cytoplasm</location>
    </subcellularLocation>
</comment>
<comment type="similarity">
    <text evidence="1">Belongs to the EF-Ts family.</text>
</comment>
<keyword id="KW-0963">Cytoplasm</keyword>
<keyword id="KW-0251">Elongation factor</keyword>
<keyword id="KW-0648">Protein biosynthesis</keyword>